<reference key="1">
    <citation type="submission" date="1999-02" db="EMBL/GenBank/DDBJ databases">
        <authorList>
            <person name="Kahler C.M."/>
            <person name="Stephens D.S."/>
        </authorList>
    </citation>
    <scope>NUCLEOTIDE SEQUENCE [GENOMIC DNA]</scope>
    <source>
        <strain>CDC 8201085 / NMB / Serogroup B</strain>
    </source>
</reference>
<reference key="2">
    <citation type="journal article" date="2000" name="Science">
        <title>Complete genome sequence of Neisseria meningitidis serogroup B strain MC58.</title>
        <authorList>
            <person name="Tettelin H."/>
            <person name="Saunders N.J."/>
            <person name="Heidelberg J.F."/>
            <person name="Jeffries A.C."/>
            <person name="Nelson K.E."/>
            <person name="Eisen J.A."/>
            <person name="Ketchum K.A."/>
            <person name="Hood D.W."/>
            <person name="Peden J.F."/>
            <person name="Dodson R.J."/>
            <person name="Nelson W.C."/>
            <person name="Gwinn M.L."/>
            <person name="DeBoy R.T."/>
            <person name="Peterson J.D."/>
            <person name="Hickey E.K."/>
            <person name="Haft D.H."/>
            <person name="Salzberg S.L."/>
            <person name="White O."/>
            <person name="Fleischmann R.D."/>
            <person name="Dougherty B.A."/>
            <person name="Mason T.M."/>
            <person name="Ciecko A."/>
            <person name="Parksey D.S."/>
            <person name="Blair E."/>
            <person name="Cittone H."/>
            <person name="Clark E.B."/>
            <person name="Cotton M.D."/>
            <person name="Utterback T.R."/>
            <person name="Khouri H.M."/>
            <person name="Qin H."/>
            <person name="Vamathevan J.J."/>
            <person name="Gill J."/>
            <person name="Scarlato V."/>
            <person name="Masignani V."/>
            <person name="Pizza M."/>
            <person name="Grandi G."/>
            <person name="Sun L."/>
            <person name="Smith H.O."/>
            <person name="Fraser C.M."/>
            <person name="Moxon E.R."/>
            <person name="Rappuoli R."/>
            <person name="Venter J.C."/>
        </authorList>
    </citation>
    <scope>NUCLEOTIDE SEQUENCE [LARGE SCALE GENOMIC DNA]</scope>
    <source>
        <strain>ATCC BAA-335 / MC58</strain>
    </source>
</reference>
<gene>
    <name evidence="1" type="primary">ilvC</name>
    <name type="ordered locus">NMB1574</name>
</gene>
<protein>
    <recommendedName>
        <fullName evidence="1">Ketol-acid reductoisomerase (NADP(+))</fullName>
        <shortName evidence="1">KARI</shortName>
        <ecNumber evidence="1">1.1.1.86</ecNumber>
    </recommendedName>
    <alternativeName>
        <fullName evidence="1">Acetohydroxy-acid isomeroreductase</fullName>
        <shortName evidence="1">AHIR</shortName>
    </alternativeName>
    <alternativeName>
        <fullName evidence="1">Alpha-keto-beta-hydroxylacyl reductoisomerase</fullName>
    </alternativeName>
    <alternativeName>
        <fullName evidence="1">Ketol-acid reductoisomerase type 1</fullName>
    </alternativeName>
    <alternativeName>
        <fullName evidence="1">Ketol-acid reductoisomerase type I</fullName>
    </alternativeName>
</protein>
<proteinExistence type="inferred from homology"/>
<dbReference type="EC" id="1.1.1.86" evidence="1"/>
<dbReference type="EMBL" id="AF125563">
    <property type="protein sequence ID" value="AAD32178.1"/>
    <property type="molecule type" value="Genomic_DNA"/>
</dbReference>
<dbReference type="EMBL" id="AE002098">
    <property type="protein sequence ID" value="AAF41927.1"/>
    <property type="molecule type" value="Genomic_DNA"/>
</dbReference>
<dbReference type="PIR" id="F81066">
    <property type="entry name" value="F81066"/>
</dbReference>
<dbReference type="RefSeq" id="NP_274580.1">
    <property type="nucleotide sequence ID" value="NC_003112.2"/>
</dbReference>
<dbReference type="RefSeq" id="WP_002218988.1">
    <property type="nucleotide sequence ID" value="NC_003112.2"/>
</dbReference>
<dbReference type="SMR" id="Q9JYI2"/>
<dbReference type="FunCoup" id="Q9JYI2">
    <property type="interactions" value="479"/>
</dbReference>
<dbReference type="STRING" id="122586.NMB1574"/>
<dbReference type="PaxDb" id="122586-NMB1574"/>
<dbReference type="KEGG" id="nme:NMB1574"/>
<dbReference type="PATRIC" id="fig|122586.8.peg.2025"/>
<dbReference type="HOGENOM" id="CLU_033821_0_1_4"/>
<dbReference type="InParanoid" id="Q9JYI2"/>
<dbReference type="OrthoDB" id="9804088at2"/>
<dbReference type="UniPathway" id="UPA00047">
    <property type="reaction ID" value="UER00056"/>
</dbReference>
<dbReference type="UniPathway" id="UPA00049">
    <property type="reaction ID" value="UER00060"/>
</dbReference>
<dbReference type="Proteomes" id="UP000000425">
    <property type="component" value="Chromosome"/>
</dbReference>
<dbReference type="GO" id="GO:0005829">
    <property type="term" value="C:cytosol"/>
    <property type="evidence" value="ECO:0000318"/>
    <property type="project" value="GO_Central"/>
</dbReference>
<dbReference type="GO" id="GO:0004455">
    <property type="term" value="F:ketol-acid reductoisomerase activity"/>
    <property type="evidence" value="ECO:0000318"/>
    <property type="project" value="GO_Central"/>
</dbReference>
<dbReference type="GO" id="GO:0000287">
    <property type="term" value="F:magnesium ion binding"/>
    <property type="evidence" value="ECO:0007669"/>
    <property type="project" value="UniProtKB-UniRule"/>
</dbReference>
<dbReference type="GO" id="GO:0050661">
    <property type="term" value="F:NADP binding"/>
    <property type="evidence" value="ECO:0007669"/>
    <property type="project" value="InterPro"/>
</dbReference>
<dbReference type="GO" id="GO:0009097">
    <property type="term" value="P:isoleucine biosynthetic process"/>
    <property type="evidence" value="ECO:0000318"/>
    <property type="project" value="GO_Central"/>
</dbReference>
<dbReference type="GO" id="GO:0009099">
    <property type="term" value="P:L-valine biosynthetic process"/>
    <property type="evidence" value="ECO:0000318"/>
    <property type="project" value="GO_Central"/>
</dbReference>
<dbReference type="FunFam" id="3.40.50.720:FF:000023">
    <property type="entry name" value="Ketol-acid reductoisomerase (NADP(+))"/>
    <property type="match status" value="1"/>
</dbReference>
<dbReference type="Gene3D" id="6.10.240.10">
    <property type="match status" value="1"/>
</dbReference>
<dbReference type="Gene3D" id="3.40.50.720">
    <property type="entry name" value="NAD(P)-binding Rossmann-like Domain"/>
    <property type="match status" value="1"/>
</dbReference>
<dbReference type="HAMAP" id="MF_00435">
    <property type="entry name" value="IlvC"/>
    <property type="match status" value="1"/>
</dbReference>
<dbReference type="InterPro" id="IPR008927">
    <property type="entry name" value="6-PGluconate_DH-like_C_sf"/>
</dbReference>
<dbReference type="InterPro" id="IPR013023">
    <property type="entry name" value="KARI"/>
</dbReference>
<dbReference type="InterPro" id="IPR000506">
    <property type="entry name" value="KARI_C"/>
</dbReference>
<dbReference type="InterPro" id="IPR013116">
    <property type="entry name" value="KARI_N"/>
</dbReference>
<dbReference type="InterPro" id="IPR014359">
    <property type="entry name" value="KARI_prok"/>
</dbReference>
<dbReference type="InterPro" id="IPR036291">
    <property type="entry name" value="NAD(P)-bd_dom_sf"/>
</dbReference>
<dbReference type="NCBIfam" id="TIGR00465">
    <property type="entry name" value="ilvC"/>
    <property type="match status" value="1"/>
</dbReference>
<dbReference type="NCBIfam" id="NF004017">
    <property type="entry name" value="PRK05479.1"/>
    <property type="match status" value="1"/>
</dbReference>
<dbReference type="NCBIfam" id="NF009940">
    <property type="entry name" value="PRK13403.1"/>
    <property type="match status" value="1"/>
</dbReference>
<dbReference type="PANTHER" id="PTHR21371">
    <property type="entry name" value="KETOL-ACID REDUCTOISOMERASE, MITOCHONDRIAL"/>
    <property type="match status" value="1"/>
</dbReference>
<dbReference type="PANTHER" id="PTHR21371:SF1">
    <property type="entry name" value="KETOL-ACID REDUCTOISOMERASE, MITOCHONDRIAL"/>
    <property type="match status" value="1"/>
</dbReference>
<dbReference type="Pfam" id="PF01450">
    <property type="entry name" value="KARI_C"/>
    <property type="match status" value="1"/>
</dbReference>
<dbReference type="Pfam" id="PF07991">
    <property type="entry name" value="KARI_N"/>
    <property type="match status" value="1"/>
</dbReference>
<dbReference type="PIRSF" id="PIRSF000116">
    <property type="entry name" value="IlvC_gammaproteo"/>
    <property type="match status" value="1"/>
</dbReference>
<dbReference type="SUPFAM" id="SSF48179">
    <property type="entry name" value="6-phosphogluconate dehydrogenase C-terminal domain-like"/>
    <property type="match status" value="1"/>
</dbReference>
<dbReference type="SUPFAM" id="SSF51735">
    <property type="entry name" value="NAD(P)-binding Rossmann-fold domains"/>
    <property type="match status" value="1"/>
</dbReference>
<dbReference type="PROSITE" id="PS51851">
    <property type="entry name" value="KARI_C"/>
    <property type="match status" value="1"/>
</dbReference>
<dbReference type="PROSITE" id="PS51850">
    <property type="entry name" value="KARI_N"/>
    <property type="match status" value="1"/>
</dbReference>
<evidence type="ECO:0000255" key="1">
    <source>
        <dbReference type="HAMAP-Rule" id="MF_00435"/>
    </source>
</evidence>
<evidence type="ECO:0000255" key="2">
    <source>
        <dbReference type="PROSITE-ProRule" id="PRU01197"/>
    </source>
</evidence>
<evidence type="ECO:0000255" key="3">
    <source>
        <dbReference type="PROSITE-ProRule" id="PRU01198"/>
    </source>
</evidence>
<evidence type="ECO:0000305" key="4"/>
<accession>Q9JYI2</accession>
<accession>Q9X5I7</accession>
<comment type="function">
    <text evidence="1">Involved in the biosynthesis of branched-chain amino acids (BCAA). Catalyzes an alkyl-migration followed by a ketol-acid reduction of (S)-2-acetolactate (S2AL) to yield (R)-2,3-dihydroxy-isovalerate. In the isomerase reaction, S2AL is rearranged via a Mg-dependent methyl migration to produce 3-hydroxy-3-methyl-2-ketobutyrate (HMKB). In the reductase reaction, this 2-ketoacid undergoes a metal-dependent reduction by NADPH to yield (R)-2,3-dihydroxy-isovalerate.</text>
</comment>
<comment type="catalytic activity">
    <reaction evidence="1">
        <text>(2R)-2,3-dihydroxy-3-methylbutanoate + NADP(+) = (2S)-2-acetolactate + NADPH + H(+)</text>
        <dbReference type="Rhea" id="RHEA:22068"/>
        <dbReference type="ChEBI" id="CHEBI:15378"/>
        <dbReference type="ChEBI" id="CHEBI:49072"/>
        <dbReference type="ChEBI" id="CHEBI:57783"/>
        <dbReference type="ChEBI" id="CHEBI:58349"/>
        <dbReference type="ChEBI" id="CHEBI:58476"/>
        <dbReference type="EC" id="1.1.1.86"/>
    </reaction>
</comment>
<comment type="catalytic activity">
    <reaction evidence="1">
        <text>(2R,3R)-2,3-dihydroxy-3-methylpentanoate + NADP(+) = (S)-2-ethyl-2-hydroxy-3-oxobutanoate + NADPH + H(+)</text>
        <dbReference type="Rhea" id="RHEA:13493"/>
        <dbReference type="ChEBI" id="CHEBI:15378"/>
        <dbReference type="ChEBI" id="CHEBI:49256"/>
        <dbReference type="ChEBI" id="CHEBI:49258"/>
        <dbReference type="ChEBI" id="CHEBI:57783"/>
        <dbReference type="ChEBI" id="CHEBI:58349"/>
        <dbReference type="EC" id="1.1.1.86"/>
    </reaction>
</comment>
<comment type="cofactor">
    <cofactor evidence="1">
        <name>Mg(2+)</name>
        <dbReference type="ChEBI" id="CHEBI:18420"/>
    </cofactor>
    <text evidence="1">Binds 2 magnesium ions per subunit.</text>
</comment>
<comment type="pathway">
    <text evidence="1">Amino-acid biosynthesis; L-isoleucine biosynthesis; L-isoleucine from 2-oxobutanoate: step 2/4.</text>
</comment>
<comment type="pathway">
    <text evidence="1">Amino-acid biosynthesis; L-valine biosynthesis; L-valine from pyruvate: step 2/4.</text>
</comment>
<comment type="similarity">
    <text evidence="1">Belongs to the ketol-acid reductoisomerase family.</text>
</comment>
<name>ILVC_NEIMB</name>
<organism>
    <name type="scientific">Neisseria meningitidis serogroup B (strain ATCC BAA-335 / MC58)</name>
    <dbReference type="NCBI Taxonomy" id="122586"/>
    <lineage>
        <taxon>Bacteria</taxon>
        <taxon>Pseudomonadati</taxon>
        <taxon>Pseudomonadota</taxon>
        <taxon>Betaproteobacteria</taxon>
        <taxon>Neisseriales</taxon>
        <taxon>Neisseriaceae</taxon>
        <taxon>Neisseria</taxon>
    </lineage>
</organism>
<sequence>MQVYYDKDADLSLIKGKTVAIIGYGSQGHAHAANLKDSGVNVVIGLRQGSSWKKAEAAGHVVKTVAEATKEADVVMLLLPDETMPAVYHAEVTANLKEGATLAFAHGFNVHYNQIVPRADLDVIMVAPKGPGHTVRSEYKRGGGVPSLIAVYQDNSGKAKDIALSYAAANGGTKGGVIETTFREETETDLFGEQAVLCGGVVELIKAGFETLTEAGYAPEMAYFECLHEMKLIVDLIFEGGIANMNYSISNNAEYGEYVTGPEVVNASSKEAMRNALKRIQTGEYAKMFIQEGNVNYASMTARRRLNADHQVEKVGAQLRAMMPWITANKLVDQDKN</sequence>
<keyword id="KW-0028">Amino-acid biosynthesis</keyword>
<keyword id="KW-0100">Branched-chain amino acid biosynthesis</keyword>
<keyword id="KW-0460">Magnesium</keyword>
<keyword id="KW-0479">Metal-binding</keyword>
<keyword id="KW-0521">NADP</keyword>
<keyword id="KW-0560">Oxidoreductase</keyword>
<keyword id="KW-1185">Reference proteome</keyword>
<feature type="chain" id="PRO_0000151332" description="Ketol-acid reductoisomerase (NADP(+))">
    <location>
        <begin position="1"/>
        <end position="337"/>
    </location>
</feature>
<feature type="domain" description="KARI N-terminal Rossmann" evidence="2">
    <location>
        <begin position="1"/>
        <end position="180"/>
    </location>
</feature>
<feature type="domain" description="KARI C-terminal knotted" evidence="3">
    <location>
        <begin position="181"/>
        <end position="326"/>
    </location>
</feature>
<feature type="active site" evidence="1">
    <location>
        <position position="106"/>
    </location>
</feature>
<feature type="binding site" evidence="1">
    <location>
        <begin position="24"/>
        <end position="27"/>
    </location>
    <ligand>
        <name>NADP(+)</name>
        <dbReference type="ChEBI" id="CHEBI:58349"/>
    </ligand>
</feature>
<feature type="binding site" evidence="1">
    <location>
        <position position="47"/>
    </location>
    <ligand>
        <name>NADP(+)</name>
        <dbReference type="ChEBI" id="CHEBI:58349"/>
    </ligand>
</feature>
<feature type="binding site" evidence="1">
    <location>
        <position position="51"/>
    </location>
    <ligand>
        <name>NADP(+)</name>
        <dbReference type="ChEBI" id="CHEBI:58349"/>
    </ligand>
</feature>
<feature type="binding site" evidence="1">
    <location>
        <position position="132"/>
    </location>
    <ligand>
        <name>NADP(+)</name>
        <dbReference type="ChEBI" id="CHEBI:58349"/>
    </ligand>
</feature>
<feature type="binding site" evidence="1">
    <location>
        <position position="189"/>
    </location>
    <ligand>
        <name>Mg(2+)</name>
        <dbReference type="ChEBI" id="CHEBI:18420"/>
        <label>1</label>
    </ligand>
</feature>
<feature type="binding site" evidence="1">
    <location>
        <position position="189"/>
    </location>
    <ligand>
        <name>Mg(2+)</name>
        <dbReference type="ChEBI" id="CHEBI:18420"/>
        <label>2</label>
    </ligand>
</feature>
<feature type="binding site" evidence="1">
    <location>
        <position position="193"/>
    </location>
    <ligand>
        <name>Mg(2+)</name>
        <dbReference type="ChEBI" id="CHEBI:18420"/>
        <label>1</label>
    </ligand>
</feature>
<feature type="binding site" evidence="1">
    <location>
        <position position="225"/>
    </location>
    <ligand>
        <name>Mg(2+)</name>
        <dbReference type="ChEBI" id="CHEBI:18420"/>
        <label>2</label>
    </ligand>
</feature>
<feature type="binding site" evidence="1">
    <location>
        <position position="229"/>
    </location>
    <ligand>
        <name>Mg(2+)</name>
        <dbReference type="ChEBI" id="CHEBI:18420"/>
        <label>2</label>
    </ligand>
</feature>
<feature type="binding site" evidence="1">
    <location>
        <position position="250"/>
    </location>
    <ligand>
        <name>substrate</name>
    </ligand>
</feature>
<feature type="sequence conflict" description="In Ref. 1; AAD32178." evidence="4" ref="1">
    <original>N</original>
    <variation>G</variation>
    <location>
        <position position="294"/>
    </location>
</feature>